<keyword id="KW-0053">Apoptosis</keyword>
<keyword id="KW-0378">Hydrolase</keyword>
<keyword id="KW-0472">Membrane</keyword>
<keyword id="KW-0496">Mitochondrion</keyword>
<keyword id="KW-0645">Protease</keyword>
<keyword id="KW-1185">Reference proteome</keyword>
<keyword id="KW-0720">Serine protease</keyword>
<keyword id="KW-0809">Transit peptide</keyword>
<keyword id="KW-0812">Transmembrane</keyword>
<keyword id="KW-1133">Transmembrane helix</keyword>
<keyword id="KW-0865">Zymogen</keyword>
<accession>B4QZU6</accession>
<reference evidence="6" key="1">
    <citation type="journal article" date="2007" name="Nature">
        <title>Evolution of genes and genomes on the Drosophila phylogeny.</title>
        <authorList>
            <consortium name="Drosophila 12 genomes consortium"/>
        </authorList>
    </citation>
    <scope>NUCLEOTIDE SEQUENCE [LARGE SCALE GENOMIC DNA]</scope>
</reference>
<comment type="function">
    <text evidence="2">Serine protease that shows proteolytic activity against a non-specific substrate beta-casein. Promotes or induces cell death either by direct binding to and inhibition of BIRC proteins (also called inhibitor of apoptosis proteins, IAPs), leading to an increase in caspase activity, or by a BIRC inhibition-independent, caspase-independent and serine protease activity-dependent mechanism. Can antagonize antiapoptotic activity of th/Diap1 by directly inducing the degradation of th/Diap1 (By similarity).</text>
</comment>
<comment type="catalytic activity">
    <reaction>
        <text>Cleavage of non-polar aliphatic amino-acids at the P1 position, with a preference for Val, Ile and Met. At the P2 and P3 positions, Arg is selected most strongly with a secondary preference for other hydrophilic residues.</text>
        <dbReference type="EC" id="3.4.21.108"/>
    </reaction>
</comment>
<comment type="subunit">
    <text evidence="2">Interacts with th/DIAP1 (via BIR 2 domain).</text>
</comment>
<comment type="subcellular location">
    <subcellularLocation>
        <location evidence="2">Mitochondrion intermembrane space</location>
        <topology evidence="3">Single-pass membrane protein</topology>
    </subcellularLocation>
    <subcellularLocation>
        <location evidence="2">Mitochondrion membrane</location>
        <topology evidence="3">Single-pass membrane protein</topology>
    </subcellularLocation>
    <text evidence="2">Predominantly present in the intermembrane space. Released into the cytosol following apoptotic stimuli, such as UV treatment. The extramitochondrial protein does not diffuse throughout the cytosol but stays near the mitochondria.</text>
</comment>
<comment type="similarity">
    <text evidence="3">Belongs to the peptidase S1C family.</text>
</comment>
<sequence>MALRGCHRLEVIFKRCIASPVLHSQAGNRRSSQLAIKGVDPNSNGNSGQYQQNGEHKEKGWRRLVRFFVPFSLGAAVSAAIIQREDFTPTIAASKMTGRRRDFNFIADVVAGCADSVVYIEIKDTRHFDYFSGQPITASNGSGFIIEQNGLILTNAHVVINKPHTMVQVRLSDGRTFPATIEDVDQTSDLATLRIQVNNLSVMRLGKSSTLRSGEWVVALGSPLALSNTVTAGVISSTQRASQELGLRNRDINYLQTDAAITFGNSGGPLVNLDGEAIGVNSMKVTAGISFAIPIDYVKVFLERAAEKRKKGSAYKTGYPVKRYMGITMLTLTPDILFELKSRSQNMPNNLTHGVLVWKVIVGSPAHSGGLQPGDIVTHINKKEIKNSSDVYDALADNSKTLDIVILRGVKQMHVTITPEDP</sequence>
<dbReference type="EC" id="3.4.21.108"/>
<dbReference type="EMBL" id="CM000364">
    <property type="protein sequence ID" value="EDX12944.1"/>
    <property type="molecule type" value="Genomic_DNA"/>
</dbReference>
<dbReference type="SMR" id="B4QZU6"/>
<dbReference type="STRING" id="7240.B4QZU6"/>
<dbReference type="EnsemblMetazoa" id="FBtr0220327">
    <property type="protein sequence ID" value="FBpp0218819"/>
    <property type="gene ID" value="FBgn0191889"/>
</dbReference>
<dbReference type="EnsemblMetazoa" id="XM_002103405.4">
    <property type="protein sequence ID" value="XP_002103441.1"/>
    <property type="gene ID" value="LOC6728089"/>
</dbReference>
<dbReference type="GeneID" id="6728089"/>
<dbReference type="KEGG" id="dsi:Dsimw501_GD20417"/>
<dbReference type="CTD" id="27429"/>
<dbReference type="HOGENOM" id="CLU_020120_6_0_1"/>
<dbReference type="OMA" id="IMSPEGY"/>
<dbReference type="OrthoDB" id="4217619at2759"/>
<dbReference type="PhylomeDB" id="B4QZU6"/>
<dbReference type="Proteomes" id="UP000000304">
    <property type="component" value="Chromosome 3R"/>
</dbReference>
<dbReference type="Bgee" id="FBgn0191889">
    <property type="expression patterns" value="Expressed in male reproductive system and 3 other cell types or tissues"/>
</dbReference>
<dbReference type="GO" id="GO:0005829">
    <property type="term" value="C:cytosol"/>
    <property type="evidence" value="ECO:0007669"/>
    <property type="project" value="EnsemblMetazoa"/>
</dbReference>
<dbReference type="GO" id="GO:0005758">
    <property type="term" value="C:mitochondrial intermembrane space"/>
    <property type="evidence" value="ECO:0007669"/>
    <property type="project" value="UniProtKB-SubCell"/>
</dbReference>
<dbReference type="GO" id="GO:0031966">
    <property type="term" value="C:mitochondrial membrane"/>
    <property type="evidence" value="ECO:0007669"/>
    <property type="project" value="UniProtKB-SubCell"/>
</dbReference>
<dbReference type="GO" id="GO:0016006">
    <property type="term" value="C:Nebenkern"/>
    <property type="evidence" value="ECO:0007669"/>
    <property type="project" value="EnsemblMetazoa"/>
</dbReference>
<dbReference type="GO" id="GO:0004252">
    <property type="term" value="F:serine-type endopeptidase activity"/>
    <property type="evidence" value="ECO:0007669"/>
    <property type="project" value="EnsemblMetazoa"/>
</dbReference>
<dbReference type="GO" id="GO:0006915">
    <property type="term" value="P:apoptotic process"/>
    <property type="evidence" value="ECO:0007669"/>
    <property type="project" value="UniProtKB-KW"/>
</dbReference>
<dbReference type="GO" id="GO:0035234">
    <property type="term" value="P:ectopic germ cell programmed cell death"/>
    <property type="evidence" value="ECO:0007669"/>
    <property type="project" value="EnsemblMetazoa"/>
</dbReference>
<dbReference type="GO" id="GO:0007005">
    <property type="term" value="P:mitochondrion organization"/>
    <property type="evidence" value="ECO:0007669"/>
    <property type="project" value="EnsemblMetazoa"/>
</dbReference>
<dbReference type="GO" id="GO:0043065">
    <property type="term" value="P:positive regulation of apoptotic process"/>
    <property type="evidence" value="ECO:0007669"/>
    <property type="project" value="EnsemblMetazoa"/>
</dbReference>
<dbReference type="GO" id="GO:0006508">
    <property type="term" value="P:proteolysis"/>
    <property type="evidence" value="ECO:0007669"/>
    <property type="project" value="UniProtKB-KW"/>
</dbReference>
<dbReference type="GO" id="GO:0007283">
    <property type="term" value="P:spermatogenesis"/>
    <property type="evidence" value="ECO:0007669"/>
    <property type="project" value="EnsemblMetazoa"/>
</dbReference>
<dbReference type="CDD" id="cd06785">
    <property type="entry name" value="cpPDZ_HtrA-like"/>
    <property type="match status" value="1"/>
</dbReference>
<dbReference type="FunFam" id="2.40.10.120:FF:000004">
    <property type="entry name" value="Serine protease HTRA2, mitochondrial"/>
    <property type="match status" value="1"/>
</dbReference>
<dbReference type="Gene3D" id="2.30.42.10">
    <property type="match status" value="1"/>
</dbReference>
<dbReference type="Gene3D" id="2.40.10.120">
    <property type="match status" value="1"/>
</dbReference>
<dbReference type="InterPro" id="IPR001478">
    <property type="entry name" value="PDZ"/>
</dbReference>
<dbReference type="InterPro" id="IPR041489">
    <property type="entry name" value="PDZ_6"/>
</dbReference>
<dbReference type="InterPro" id="IPR036034">
    <property type="entry name" value="PDZ_sf"/>
</dbReference>
<dbReference type="InterPro" id="IPR009003">
    <property type="entry name" value="Peptidase_S1_PA"/>
</dbReference>
<dbReference type="InterPro" id="IPR001940">
    <property type="entry name" value="Peptidase_S1C"/>
</dbReference>
<dbReference type="PANTHER" id="PTHR22939">
    <property type="entry name" value="SERINE PROTEASE FAMILY S1C HTRA-RELATED"/>
    <property type="match status" value="1"/>
</dbReference>
<dbReference type="PANTHER" id="PTHR22939:SF129">
    <property type="entry name" value="SERINE PROTEASE HTRA2, MITOCHONDRIAL"/>
    <property type="match status" value="1"/>
</dbReference>
<dbReference type="Pfam" id="PF17820">
    <property type="entry name" value="PDZ_6"/>
    <property type="match status" value="1"/>
</dbReference>
<dbReference type="Pfam" id="PF13365">
    <property type="entry name" value="Trypsin_2"/>
    <property type="match status" value="1"/>
</dbReference>
<dbReference type="PRINTS" id="PR00834">
    <property type="entry name" value="PROTEASES2C"/>
</dbReference>
<dbReference type="SMART" id="SM00228">
    <property type="entry name" value="PDZ"/>
    <property type="match status" value="1"/>
</dbReference>
<dbReference type="SUPFAM" id="SSF50156">
    <property type="entry name" value="PDZ domain-like"/>
    <property type="match status" value="1"/>
</dbReference>
<dbReference type="SUPFAM" id="SSF50494">
    <property type="entry name" value="Trypsin-like serine proteases"/>
    <property type="match status" value="1"/>
</dbReference>
<dbReference type="PROSITE" id="PS50106">
    <property type="entry name" value="PDZ"/>
    <property type="match status" value="1"/>
</dbReference>
<protein>
    <recommendedName>
        <fullName evidence="2">Serine protease HTRA2, mitochondrial</fullName>
        <ecNumber>3.4.21.108</ecNumber>
    </recommendedName>
    <alternativeName>
        <fullName evidence="2">High temperature requirement protein A2</fullName>
    </alternativeName>
</protein>
<name>HTRA2_DROSI</name>
<feature type="transit peptide" description="Mitochondrion" evidence="3">
    <location>
        <begin position="1"/>
        <end position="17"/>
    </location>
</feature>
<feature type="propeptide" id="PRO_0000382195" evidence="3">
    <location>
        <begin position="18"/>
        <end position="74"/>
    </location>
</feature>
<feature type="chain" id="PRO_0000382196" description="Serine protease HTRA2, mitochondrial" evidence="2">
    <location>
        <begin position="75"/>
        <end position="422"/>
    </location>
</feature>
<feature type="transmembrane region" description="Helical" evidence="3">
    <location>
        <begin position="64"/>
        <end position="82"/>
    </location>
</feature>
<feature type="domain" description="PDZ" evidence="4">
    <location>
        <begin position="325"/>
        <end position="410"/>
    </location>
</feature>
<feature type="region of interest" description="Disordered" evidence="5">
    <location>
        <begin position="33"/>
        <end position="55"/>
    </location>
</feature>
<feature type="region of interest" description="Serine protease" evidence="3">
    <location>
        <begin position="139"/>
        <end position="302"/>
    </location>
</feature>
<feature type="short sequence motif" description="IAP-binding" evidence="3">
    <location>
        <begin position="75"/>
        <end position="78"/>
    </location>
</feature>
<feature type="short sequence motif" description="IAP-binding" evidence="3">
    <location>
        <begin position="94"/>
        <end position="97"/>
    </location>
</feature>
<feature type="compositionally biased region" description="Low complexity" evidence="5">
    <location>
        <begin position="42"/>
        <end position="53"/>
    </location>
</feature>
<feature type="active site" description="Charge relay system" evidence="1">
    <location>
        <position position="157"/>
    </location>
</feature>
<feature type="active site" description="Charge relay system" evidence="1">
    <location>
        <position position="189"/>
    </location>
</feature>
<feature type="active site" description="Charge relay system" evidence="2">
    <location>
        <position position="266"/>
    </location>
</feature>
<proteinExistence type="inferred from homology"/>
<evidence type="ECO:0000250" key="1">
    <source>
        <dbReference type="UniProtKB" id="O43464"/>
    </source>
</evidence>
<evidence type="ECO:0000250" key="2">
    <source>
        <dbReference type="UniProtKB" id="Q9VFJ3"/>
    </source>
</evidence>
<evidence type="ECO:0000255" key="3"/>
<evidence type="ECO:0000255" key="4">
    <source>
        <dbReference type="PROSITE-ProRule" id="PRU00143"/>
    </source>
</evidence>
<evidence type="ECO:0000256" key="5">
    <source>
        <dbReference type="SAM" id="MobiDB-lite"/>
    </source>
</evidence>
<evidence type="ECO:0000312" key="6">
    <source>
        <dbReference type="EMBL" id="EDX12944.1"/>
    </source>
</evidence>
<gene>
    <name evidence="2" type="primary">HtrA2</name>
    <name type="ORF">GD20417</name>
</gene>
<organism>
    <name type="scientific">Drosophila simulans</name>
    <name type="common">Fruit fly</name>
    <dbReference type="NCBI Taxonomy" id="7240"/>
    <lineage>
        <taxon>Eukaryota</taxon>
        <taxon>Metazoa</taxon>
        <taxon>Ecdysozoa</taxon>
        <taxon>Arthropoda</taxon>
        <taxon>Hexapoda</taxon>
        <taxon>Insecta</taxon>
        <taxon>Pterygota</taxon>
        <taxon>Neoptera</taxon>
        <taxon>Endopterygota</taxon>
        <taxon>Diptera</taxon>
        <taxon>Brachycera</taxon>
        <taxon>Muscomorpha</taxon>
        <taxon>Ephydroidea</taxon>
        <taxon>Drosophilidae</taxon>
        <taxon>Drosophila</taxon>
        <taxon>Sophophora</taxon>
    </lineage>
</organism>